<dbReference type="EMBL" id="DA205423">
    <property type="status" value="NOT_ANNOTATED_CDS"/>
    <property type="molecule type" value="mRNA"/>
</dbReference>
<dbReference type="EMBL" id="AC005325">
    <property type="status" value="NOT_ANNOTATED_CDS"/>
    <property type="molecule type" value="Genomic_DNA"/>
</dbReference>
<dbReference type="EMBL" id="CH471109">
    <property type="protein sequence ID" value="EAW94504.1"/>
    <property type="molecule type" value="Genomic_DNA"/>
</dbReference>
<dbReference type="CCDS" id="CCDS62263.1"/>
<dbReference type="RefSeq" id="NP_001269473.1">
    <property type="nucleotide sequence ID" value="NM_001282544.2"/>
</dbReference>
<dbReference type="SMR" id="A6NF36"/>
<dbReference type="BioGRID" id="3191596">
    <property type="interactions" value="1"/>
</dbReference>
<dbReference type="IntAct" id="A6NF36">
    <property type="interactions" value="1"/>
</dbReference>
<dbReference type="STRING" id="9606.ENSP00000299415"/>
<dbReference type="BioMuta" id="CCDC182"/>
<dbReference type="jPOST" id="A6NF36"/>
<dbReference type="MassIVE" id="A6NF36"/>
<dbReference type="PaxDb" id="9606-ENSP00000299415"/>
<dbReference type="PeptideAtlas" id="A6NF36"/>
<dbReference type="Antibodypedia" id="21057">
    <property type="antibodies" value="44 antibodies from 10 providers"/>
</dbReference>
<dbReference type="DNASU" id="101927581"/>
<dbReference type="Ensembl" id="ENST00000299415.3">
    <property type="protein sequence ID" value="ENSP00000299415.2"/>
    <property type="gene ID" value="ENSG00000166329.3"/>
</dbReference>
<dbReference type="GeneID" id="101927581"/>
<dbReference type="KEGG" id="hsa:101927581"/>
<dbReference type="MANE-Select" id="ENST00000299415.3">
    <property type="protein sequence ID" value="ENSP00000299415.2"/>
    <property type="RefSeq nucleotide sequence ID" value="NM_001282544.2"/>
    <property type="RefSeq protein sequence ID" value="NP_001269473.1"/>
</dbReference>
<dbReference type="UCSC" id="uc032fnr.2">
    <property type="organism name" value="human"/>
</dbReference>
<dbReference type="AGR" id="HGNC:49392"/>
<dbReference type="CTD" id="101927581"/>
<dbReference type="GeneCards" id="CCDC182"/>
<dbReference type="HGNC" id="HGNC:49392">
    <property type="gene designation" value="CCDC182"/>
</dbReference>
<dbReference type="HPA" id="ENSG00000166329">
    <property type="expression patterns" value="Tissue enriched (testis)"/>
</dbReference>
<dbReference type="neXtProt" id="NX_A6NF36"/>
<dbReference type="OpenTargets" id="ENSG00000166329"/>
<dbReference type="VEuPathDB" id="HostDB:ENSG00000166329"/>
<dbReference type="eggNOG" id="ENOG502SV1I">
    <property type="taxonomic scope" value="Eukaryota"/>
</dbReference>
<dbReference type="GeneTree" id="ENSGT00390000014787"/>
<dbReference type="HOGENOM" id="CLU_144243_0_0_1"/>
<dbReference type="InParanoid" id="A6NF36"/>
<dbReference type="OMA" id="ASAMCSQ"/>
<dbReference type="OrthoDB" id="9611797at2759"/>
<dbReference type="PAN-GO" id="A6NF36">
    <property type="GO annotations" value="0 GO annotations based on evolutionary models"/>
</dbReference>
<dbReference type="PhylomeDB" id="A6NF36"/>
<dbReference type="BioGRID-ORCS" id="101927581">
    <property type="hits" value="6 hits in 893 CRISPR screens"/>
</dbReference>
<dbReference type="GenomeRNAi" id="101927581"/>
<dbReference type="Pharos" id="A6NF36">
    <property type="development level" value="Tdark"/>
</dbReference>
<dbReference type="PRO" id="PR:A6NF36"/>
<dbReference type="Proteomes" id="UP000005640">
    <property type="component" value="Chromosome 17"/>
</dbReference>
<dbReference type="RNAct" id="A6NF36">
    <property type="molecule type" value="protein"/>
</dbReference>
<dbReference type="Bgee" id="ENSG00000166329">
    <property type="expression patterns" value="Expressed in male germ line stem cell (sensu Vertebrata) in testis and 30 other cell types or tissues"/>
</dbReference>
<dbReference type="GO" id="GO:0008585">
    <property type="term" value="P:female gonad development"/>
    <property type="evidence" value="ECO:0000250"/>
    <property type="project" value="UniProtKB"/>
</dbReference>
<dbReference type="InterPro" id="IPR031678">
    <property type="entry name" value="DUF4715"/>
</dbReference>
<dbReference type="PANTHER" id="PTHR37364">
    <property type="entry name" value="COILED-COIL DOMAIN-CONTAINING PROTEIN 182"/>
    <property type="match status" value="1"/>
</dbReference>
<dbReference type="PANTHER" id="PTHR37364:SF1">
    <property type="entry name" value="COILED-COIL DOMAIN-CONTAINING PROTEIN 182"/>
    <property type="match status" value="1"/>
</dbReference>
<dbReference type="Pfam" id="PF15835">
    <property type="entry name" value="DUF4715"/>
    <property type="match status" value="1"/>
</dbReference>
<organism>
    <name type="scientific">Homo sapiens</name>
    <name type="common">Human</name>
    <dbReference type="NCBI Taxonomy" id="9606"/>
    <lineage>
        <taxon>Eukaryota</taxon>
        <taxon>Metazoa</taxon>
        <taxon>Chordata</taxon>
        <taxon>Craniata</taxon>
        <taxon>Vertebrata</taxon>
        <taxon>Euteleostomi</taxon>
        <taxon>Mammalia</taxon>
        <taxon>Eutheria</taxon>
        <taxon>Euarchontoglires</taxon>
        <taxon>Primates</taxon>
        <taxon>Haplorrhini</taxon>
        <taxon>Catarrhini</taxon>
        <taxon>Hominidae</taxon>
        <taxon>Homo</taxon>
    </lineage>
</organism>
<keyword id="KW-0175">Coiled coil</keyword>
<keyword id="KW-1267">Proteomics identification</keyword>
<keyword id="KW-1185">Reference proteome</keyword>
<feature type="chain" id="PRO_0000329034" description="Coiled-coil domain-containing protein 182">
    <location>
        <begin position="1"/>
        <end position="153"/>
    </location>
</feature>
<feature type="coiled-coil region" evidence="1">
    <location>
        <begin position="46"/>
        <end position="109"/>
    </location>
</feature>
<proteinExistence type="evidence at protein level"/>
<name>CC182_HUMAN</name>
<protein>
    <recommendedName>
        <fullName>Coiled-coil domain-containing protein 182</fullName>
    </recommendedName>
</protein>
<accession>A6NF36</accession>
<sequence length="153" mass="17536">MEPLYQAGSILMTVNTLQGKKMIESGLQSGDFSLSQSWPSCLPPPADLEILQQKVAGVQRELEDFKKEALKSIHYLEDAFCEMNGALVQQEEQAARVRQRLREEEDRGIVRNKVLTFLLPREKQLREHCKRLEDLLLDRGRDALRATKKSQAD</sequence>
<evidence type="ECO:0000255" key="1"/>
<reference key="1">
    <citation type="journal article" date="2004" name="Nat. Genet.">
        <title>Complete sequencing and characterization of 21,243 full-length human cDNAs.</title>
        <authorList>
            <person name="Ota T."/>
            <person name="Suzuki Y."/>
            <person name="Nishikawa T."/>
            <person name="Otsuki T."/>
            <person name="Sugiyama T."/>
            <person name="Irie R."/>
            <person name="Wakamatsu A."/>
            <person name="Hayashi K."/>
            <person name="Sato H."/>
            <person name="Nagai K."/>
            <person name="Kimura K."/>
            <person name="Makita H."/>
            <person name="Sekine M."/>
            <person name="Obayashi M."/>
            <person name="Nishi T."/>
            <person name="Shibahara T."/>
            <person name="Tanaka T."/>
            <person name="Ishii S."/>
            <person name="Yamamoto J."/>
            <person name="Saito K."/>
            <person name="Kawai Y."/>
            <person name="Isono Y."/>
            <person name="Nakamura Y."/>
            <person name="Nagahari K."/>
            <person name="Murakami K."/>
            <person name="Yasuda T."/>
            <person name="Iwayanagi T."/>
            <person name="Wagatsuma M."/>
            <person name="Shiratori A."/>
            <person name="Sudo H."/>
            <person name="Hosoiri T."/>
            <person name="Kaku Y."/>
            <person name="Kodaira H."/>
            <person name="Kondo H."/>
            <person name="Sugawara M."/>
            <person name="Takahashi M."/>
            <person name="Kanda K."/>
            <person name="Yokoi T."/>
            <person name="Furuya T."/>
            <person name="Kikkawa E."/>
            <person name="Omura Y."/>
            <person name="Abe K."/>
            <person name="Kamihara K."/>
            <person name="Katsuta N."/>
            <person name="Sato K."/>
            <person name="Tanikawa M."/>
            <person name="Yamazaki M."/>
            <person name="Ninomiya K."/>
            <person name="Ishibashi T."/>
            <person name="Yamashita H."/>
            <person name="Murakawa K."/>
            <person name="Fujimori K."/>
            <person name="Tanai H."/>
            <person name="Kimata M."/>
            <person name="Watanabe M."/>
            <person name="Hiraoka S."/>
            <person name="Chiba Y."/>
            <person name="Ishida S."/>
            <person name="Ono Y."/>
            <person name="Takiguchi S."/>
            <person name="Watanabe S."/>
            <person name="Yosida M."/>
            <person name="Hotuta T."/>
            <person name="Kusano J."/>
            <person name="Kanehori K."/>
            <person name="Takahashi-Fujii A."/>
            <person name="Hara H."/>
            <person name="Tanase T.-O."/>
            <person name="Nomura Y."/>
            <person name="Togiya S."/>
            <person name="Komai F."/>
            <person name="Hara R."/>
            <person name="Takeuchi K."/>
            <person name="Arita M."/>
            <person name="Imose N."/>
            <person name="Musashino K."/>
            <person name="Yuuki H."/>
            <person name="Oshima A."/>
            <person name="Sasaki N."/>
            <person name="Aotsuka S."/>
            <person name="Yoshikawa Y."/>
            <person name="Matsunawa H."/>
            <person name="Ichihara T."/>
            <person name="Shiohata N."/>
            <person name="Sano S."/>
            <person name="Moriya S."/>
            <person name="Momiyama H."/>
            <person name="Satoh N."/>
            <person name="Takami S."/>
            <person name="Terashima Y."/>
            <person name="Suzuki O."/>
            <person name="Nakagawa S."/>
            <person name="Senoh A."/>
            <person name="Mizoguchi H."/>
            <person name="Goto Y."/>
            <person name="Shimizu F."/>
            <person name="Wakebe H."/>
            <person name="Hishigaki H."/>
            <person name="Watanabe T."/>
            <person name="Sugiyama A."/>
            <person name="Takemoto M."/>
            <person name="Kawakami B."/>
            <person name="Yamazaki M."/>
            <person name="Watanabe K."/>
            <person name="Kumagai A."/>
            <person name="Itakura S."/>
            <person name="Fukuzumi Y."/>
            <person name="Fujimori Y."/>
            <person name="Komiyama M."/>
            <person name="Tashiro H."/>
            <person name="Tanigami A."/>
            <person name="Fujiwara T."/>
            <person name="Ono T."/>
            <person name="Yamada K."/>
            <person name="Fujii Y."/>
            <person name="Ozaki K."/>
            <person name="Hirao M."/>
            <person name="Ohmori Y."/>
            <person name="Kawabata A."/>
            <person name="Hikiji T."/>
            <person name="Kobatake N."/>
            <person name="Inagaki H."/>
            <person name="Ikema Y."/>
            <person name="Okamoto S."/>
            <person name="Okitani R."/>
            <person name="Kawakami T."/>
            <person name="Noguchi S."/>
            <person name="Itoh T."/>
            <person name="Shigeta K."/>
            <person name="Senba T."/>
            <person name="Matsumura K."/>
            <person name="Nakajima Y."/>
            <person name="Mizuno T."/>
            <person name="Morinaga M."/>
            <person name="Sasaki M."/>
            <person name="Togashi T."/>
            <person name="Oyama M."/>
            <person name="Hata H."/>
            <person name="Watanabe M."/>
            <person name="Komatsu T."/>
            <person name="Mizushima-Sugano J."/>
            <person name="Satoh T."/>
            <person name="Shirai Y."/>
            <person name="Takahashi Y."/>
            <person name="Nakagawa K."/>
            <person name="Okumura K."/>
            <person name="Nagase T."/>
            <person name="Nomura N."/>
            <person name="Kikuchi H."/>
            <person name="Masuho Y."/>
            <person name="Yamashita R."/>
            <person name="Nakai K."/>
            <person name="Yada T."/>
            <person name="Nakamura Y."/>
            <person name="Ohara O."/>
            <person name="Isogai T."/>
            <person name="Sugano S."/>
        </authorList>
    </citation>
    <scope>NUCLEOTIDE SEQUENCE [LARGE SCALE MRNA]</scope>
    <source>
        <tissue>Testis</tissue>
    </source>
</reference>
<reference key="2">
    <citation type="journal article" date="2006" name="Nature">
        <title>DNA sequence of human chromosome 17 and analysis of rearrangement in the human lineage.</title>
        <authorList>
            <person name="Zody M.C."/>
            <person name="Garber M."/>
            <person name="Adams D.J."/>
            <person name="Sharpe T."/>
            <person name="Harrow J."/>
            <person name="Lupski J.R."/>
            <person name="Nicholson C."/>
            <person name="Searle S.M."/>
            <person name="Wilming L."/>
            <person name="Young S.K."/>
            <person name="Abouelleil A."/>
            <person name="Allen N.R."/>
            <person name="Bi W."/>
            <person name="Bloom T."/>
            <person name="Borowsky M.L."/>
            <person name="Bugalter B.E."/>
            <person name="Butler J."/>
            <person name="Chang J.L."/>
            <person name="Chen C.-K."/>
            <person name="Cook A."/>
            <person name="Corum B."/>
            <person name="Cuomo C.A."/>
            <person name="de Jong P.J."/>
            <person name="DeCaprio D."/>
            <person name="Dewar K."/>
            <person name="FitzGerald M."/>
            <person name="Gilbert J."/>
            <person name="Gibson R."/>
            <person name="Gnerre S."/>
            <person name="Goldstein S."/>
            <person name="Grafham D.V."/>
            <person name="Grocock R."/>
            <person name="Hafez N."/>
            <person name="Hagopian D.S."/>
            <person name="Hart E."/>
            <person name="Norman C.H."/>
            <person name="Humphray S."/>
            <person name="Jaffe D.B."/>
            <person name="Jones M."/>
            <person name="Kamal M."/>
            <person name="Khodiyar V.K."/>
            <person name="LaButti K."/>
            <person name="Laird G."/>
            <person name="Lehoczky J."/>
            <person name="Liu X."/>
            <person name="Lokyitsang T."/>
            <person name="Loveland J."/>
            <person name="Lui A."/>
            <person name="Macdonald P."/>
            <person name="Major J.E."/>
            <person name="Matthews L."/>
            <person name="Mauceli E."/>
            <person name="McCarroll S.A."/>
            <person name="Mihalev A.H."/>
            <person name="Mudge J."/>
            <person name="Nguyen C."/>
            <person name="Nicol R."/>
            <person name="O'Leary S.B."/>
            <person name="Osoegawa K."/>
            <person name="Schwartz D.C."/>
            <person name="Shaw-Smith C."/>
            <person name="Stankiewicz P."/>
            <person name="Steward C."/>
            <person name="Swarbreck D."/>
            <person name="Venkataraman V."/>
            <person name="Whittaker C.A."/>
            <person name="Yang X."/>
            <person name="Zimmer A.R."/>
            <person name="Bradley A."/>
            <person name="Hubbard T."/>
            <person name="Birren B.W."/>
            <person name="Rogers J."/>
            <person name="Lander E.S."/>
            <person name="Nusbaum C."/>
        </authorList>
    </citation>
    <scope>NUCLEOTIDE SEQUENCE [LARGE SCALE GENOMIC DNA]</scope>
</reference>
<reference key="3">
    <citation type="submission" date="2005-09" db="EMBL/GenBank/DDBJ databases">
        <authorList>
            <person name="Mural R.J."/>
            <person name="Istrail S."/>
            <person name="Sutton G.G."/>
            <person name="Florea L."/>
            <person name="Halpern A.L."/>
            <person name="Mobarry C.M."/>
            <person name="Lippert R."/>
            <person name="Walenz B."/>
            <person name="Shatkay H."/>
            <person name="Dew I."/>
            <person name="Miller J.R."/>
            <person name="Flanigan M.J."/>
            <person name="Edwards N.J."/>
            <person name="Bolanos R."/>
            <person name="Fasulo D."/>
            <person name="Halldorsson B.V."/>
            <person name="Hannenhalli S."/>
            <person name="Turner R."/>
            <person name="Yooseph S."/>
            <person name="Lu F."/>
            <person name="Nusskern D.R."/>
            <person name="Shue B.C."/>
            <person name="Zheng X.H."/>
            <person name="Zhong F."/>
            <person name="Delcher A.L."/>
            <person name="Huson D.H."/>
            <person name="Kravitz S.A."/>
            <person name="Mouchard L."/>
            <person name="Reinert K."/>
            <person name="Remington K.A."/>
            <person name="Clark A.G."/>
            <person name="Waterman M.S."/>
            <person name="Eichler E.E."/>
            <person name="Adams M.D."/>
            <person name="Hunkapiller M.W."/>
            <person name="Myers E.W."/>
            <person name="Venter J.C."/>
        </authorList>
    </citation>
    <scope>NUCLEOTIDE SEQUENCE [LARGE SCALE GENOMIC DNA]</scope>
</reference>
<gene>
    <name type="primary">CCDC182</name>
</gene>